<accession>Q4R3X9</accession>
<comment type="function">
    <text evidence="1">Promotes dephosphorylation of transcriptional activator STAT3 by interacting with both STAT3 and protein phosphatase PTPN2. This promotes interaction of PTPN2 with STAT3 and mediates STAT3 dephosphorylation by PTPN2, leading to negative regulation of STAT3 transcriptional activator activity. May be required for spermiogenesis or sperm function.</text>
</comment>
<comment type="subunit">
    <text evidence="1">Interacts with transcriptional activator STAT3; the interaction occurs in both the nucleus and the cytoplasm, is enhanced by IL6 and promotes STAT3 dephosphorylation, leading to negative regulation of STAT3 transcriptional activator activity. Can interact with both unphosphorylated and phosphorylated STAT3 but interacts preferentially with phosphorylated STAT3 in the nucleus. Interacts with protein phosphatase PTPN2/TC45; this promotes interaction of PTPN2 with STAT3, leading to dephosphorylation of STAT3 by PTPN2.</text>
</comment>
<comment type="subcellular location">
    <subcellularLocation>
        <location evidence="1">Nucleus</location>
    </subcellularLocation>
    <subcellularLocation>
        <location evidence="1">Cytoplasm</location>
    </subcellularLocation>
    <subcellularLocation>
        <location evidence="1">Cytoplasmic vesicle</location>
        <location evidence="1">Secretory vesicle</location>
        <location evidence="1">Acrosome</location>
    </subcellularLocation>
    <text evidence="1">Localizes to both nucleus and cytoplasm but located predominantly in the nucleus. Detected in the sperm acrosome prior to the acrosome reaction and is likely to be released from acrosome-reacted sperm.</text>
</comment>
<reference key="1">
    <citation type="submission" date="2005-06" db="EMBL/GenBank/DDBJ databases">
        <title>DNA sequences of macaque genes expressed in brain or testis and its evolutionary implications.</title>
        <authorList>
            <consortium name="International consortium for macaque cDNA sequencing and analysis"/>
        </authorList>
    </citation>
    <scope>NUCLEOTIDE SEQUENCE [LARGE SCALE MRNA]</scope>
    <source>
        <tissue>Testis</tissue>
    </source>
</reference>
<keyword id="KW-0963">Cytoplasm</keyword>
<keyword id="KW-0968">Cytoplasmic vesicle</keyword>
<keyword id="KW-0539">Nucleus</keyword>
<keyword id="KW-1185">Reference proteome</keyword>
<evidence type="ECO:0000250" key="1">
    <source>
        <dbReference type="UniProtKB" id="Q3ZN08"/>
    </source>
</evidence>
<sequence length="259" mass="28027">MRDRRGSLGTCLAQVQQARGGDSNKLSYSLKKRMPMEGLWPADAPSWMNKPVVDGNSQSEALSLEMRKDPSGAGPWLHGGGPVLPYVKESVRRNPASAATRSTAVGLLPAPTECFAQVACSGVEALERDWLGGGARATDGHRGQCPKGEPRVSRLLCHQKLPEMGSFQDDPPNALPKGLGSELEPSCLHSVLSATLHACPEVLLNDETKRVFLDRLKPMFSKQTMEFKKMLKNTSDGLQITLGLLALQPFELANSLCHS</sequence>
<proteinExistence type="evidence at transcript level"/>
<protein>
    <recommendedName>
        <fullName>Protein FAM220A</fullName>
    </recommendedName>
    <alternativeName>
        <fullName>STAT3-interacting protein as a repressor</fullName>
    </alternativeName>
</protein>
<dbReference type="EMBL" id="AB179136">
    <property type="protein sequence ID" value="BAE02187.1"/>
    <property type="molecule type" value="mRNA"/>
</dbReference>
<dbReference type="RefSeq" id="NP_001271877.1">
    <property type="nucleotide sequence ID" value="NM_001284948.1"/>
</dbReference>
<dbReference type="eggNOG" id="ENOG502S2EY">
    <property type="taxonomic scope" value="Eukaryota"/>
</dbReference>
<dbReference type="Proteomes" id="UP000233100">
    <property type="component" value="Unplaced"/>
</dbReference>
<dbReference type="GO" id="GO:0001669">
    <property type="term" value="C:acrosomal vesicle"/>
    <property type="evidence" value="ECO:0000250"/>
    <property type="project" value="UniProtKB"/>
</dbReference>
<dbReference type="GO" id="GO:0005634">
    <property type="term" value="C:nucleus"/>
    <property type="evidence" value="ECO:0007669"/>
    <property type="project" value="UniProtKB-SubCell"/>
</dbReference>
<dbReference type="GO" id="GO:0097677">
    <property type="term" value="F:STAT family protein binding"/>
    <property type="evidence" value="ECO:0007669"/>
    <property type="project" value="TreeGrafter"/>
</dbReference>
<dbReference type="GO" id="GO:0000122">
    <property type="term" value="P:negative regulation of transcription by RNA polymerase II"/>
    <property type="evidence" value="ECO:0007669"/>
    <property type="project" value="TreeGrafter"/>
</dbReference>
<dbReference type="InterPro" id="IPR040355">
    <property type="entry name" value="FAM220A"/>
</dbReference>
<dbReference type="InterPro" id="IPR029155">
    <property type="entry name" value="SIPAR"/>
</dbReference>
<dbReference type="PANTHER" id="PTHR31980">
    <property type="entry name" value="PROTEIN FAM220A"/>
    <property type="match status" value="1"/>
</dbReference>
<dbReference type="PANTHER" id="PTHR31980:SF1">
    <property type="entry name" value="PROTEIN FAM220A"/>
    <property type="match status" value="1"/>
</dbReference>
<dbReference type="Pfam" id="PF15487">
    <property type="entry name" value="FAM220"/>
    <property type="match status" value="1"/>
</dbReference>
<organism>
    <name type="scientific">Macaca fascicularis</name>
    <name type="common">Crab-eating macaque</name>
    <name type="synonym">Cynomolgus monkey</name>
    <dbReference type="NCBI Taxonomy" id="9541"/>
    <lineage>
        <taxon>Eukaryota</taxon>
        <taxon>Metazoa</taxon>
        <taxon>Chordata</taxon>
        <taxon>Craniata</taxon>
        <taxon>Vertebrata</taxon>
        <taxon>Euteleostomi</taxon>
        <taxon>Mammalia</taxon>
        <taxon>Eutheria</taxon>
        <taxon>Euarchontoglires</taxon>
        <taxon>Primates</taxon>
        <taxon>Haplorrhini</taxon>
        <taxon>Catarrhini</taxon>
        <taxon>Cercopithecidae</taxon>
        <taxon>Cercopithecinae</taxon>
        <taxon>Macaca</taxon>
    </lineage>
</organism>
<feature type="chain" id="PRO_0000321924" description="Protein FAM220A">
    <location>
        <begin position="1"/>
        <end position="259"/>
    </location>
</feature>
<gene>
    <name type="primary">FAM220A</name>
    <name type="synonym">SIPAR</name>
    <name type="ORF">QtsA-13353</name>
</gene>
<name>F220A_MACFA</name>